<accession>A1R665</accession>
<comment type="function">
    <text evidence="1">Involved in the oxidation of myo-inositol (MI) to 2-keto-myo-inositol (2KMI or 2-inosose).</text>
</comment>
<comment type="catalytic activity">
    <reaction evidence="1">
        <text>myo-inositol + NAD(+) = scyllo-inosose + NADH + H(+)</text>
        <dbReference type="Rhea" id="RHEA:16949"/>
        <dbReference type="ChEBI" id="CHEBI:15378"/>
        <dbReference type="ChEBI" id="CHEBI:17268"/>
        <dbReference type="ChEBI" id="CHEBI:17811"/>
        <dbReference type="ChEBI" id="CHEBI:57540"/>
        <dbReference type="ChEBI" id="CHEBI:57945"/>
        <dbReference type="EC" id="1.1.1.18"/>
    </reaction>
</comment>
<comment type="subunit">
    <text evidence="1">Homotetramer.</text>
</comment>
<comment type="similarity">
    <text evidence="1">Belongs to the Gfo/Idh/MocA family.</text>
</comment>
<organism>
    <name type="scientific">Paenarthrobacter aurescens (strain TC1)</name>
    <dbReference type="NCBI Taxonomy" id="290340"/>
    <lineage>
        <taxon>Bacteria</taxon>
        <taxon>Bacillati</taxon>
        <taxon>Actinomycetota</taxon>
        <taxon>Actinomycetes</taxon>
        <taxon>Micrococcales</taxon>
        <taxon>Micrococcaceae</taxon>
        <taxon>Paenarthrobacter</taxon>
    </lineage>
</organism>
<proteinExistence type="inferred from homology"/>
<protein>
    <recommendedName>
        <fullName evidence="1">Inositol 2-dehydrogenase 1</fullName>
        <ecNumber evidence="1">1.1.1.18</ecNumber>
    </recommendedName>
    <alternativeName>
        <fullName evidence="1">Myo-inositol 2-dehydrogenase 1</fullName>
        <shortName evidence="1">MI 2-dehydrogenase 1</shortName>
    </alternativeName>
</protein>
<reference key="1">
    <citation type="journal article" date="2006" name="PLoS Genet.">
        <title>Secrets of soil survival revealed by the genome sequence of Arthrobacter aurescens TC1.</title>
        <authorList>
            <person name="Mongodin E.F."/>
            <person name="Shapir N."/>
            <person name="Daugherty S.C."/>
            <person name="DeBoy R.T."/>
            <person name="Emerson J.B."/>
            <person name="Shvartzbeyn A."/>
            <person name="Radune D."/>
            <person name="Vamathevan J."/>
            <person name="Riggs F."/>
            <person name="Grinberg V."/>
            <person name="Khouri H.M."/>
            <person name="Wackett L.P."/>
            <person name="Nelson K.E."/>
            <person name="Sadowsky M.J."/>
        </authorList>
    </citation>
    <scope>NUCLEOTIDE SEQUENCE [LARGE SCALE GENOMIC DNA]</scope>
    <source>
        <strain>TC1</strain>
    </source>
</reference>
<gene>
    <name evidence="1" type="primary">iolG1</name>
    <name type="ordered locus">AAur_1982</name>
</gene>
<keyword id="KW-0520">NAD</keyword>
<keyword id="KW-0560">Oxidoreductase</keyword>
<sequence length="337" mass="36338">MTKTLRVAVIGAGRMGADHIKRLSTRIHGAEVAAVVDVDLARAQAAIEGIDRAVALASADEALNNGDVNAVLIATPGFLHEEILYKALEKDFPILCEKPLTPDAGSAWKVVQAEQALGHKRIQVGFMRRFDAEYSALGAIIRNSELGELLMLHHQHRNPSTPEGFTNEMLINDSVVHEFDAIRFFTGEEITSVQVRLGKPTRSAPSGQHDPQHVLLETESGVLADVEIYVNAKFGYQVATQASFEEGIVSIGSDNGPYVQTAGKWGGNVTPGFEERFGAAYDVEVQAWVDAALRGEIGGPTAWDGYATAACCEAGVEAQKSGEKVKVQLNTKPDLYK</sequence>
<dbReference type="EC" id="1.1.1.18" evidence="1"/>
<dbReference type="EMBL" id="CP000474">
    <property type="protein sequence ID" value="ABM08500.1"/>
    <property type="molecule type" value="Genomic_DNA"/>
</dbReference>
<dbReference type="RefSeq" id="WP_011774671.1">
    <property type="nucleotide sequence ID" value="NC_008711.1"/>
</dbReference>
<dbReference type="SMR" id="A1R665"/>
<dbReference type="STRING" id="290340.AAur_1982"/>
<dbReference type="KEGG" id="aau:AAur_1982"/>
<dbReference type="eggNOG" id="COG0673">
    <property type="taxonomic scope" value="Bacteria"/>
</dbReference>
<dbReference type="HOGENOM" id="CLU_023194_0_1_11"/>
<dbReference type="OrthoDB" id="256869at2"/>
<dbReference type="Proteomes" id="UP000000637">
    <property type="component" value="Chromosome"/>
</dbReference>
<dbReference type="GO" id="GO:0050112">
    <property type="term" value="F:inositol 2-dehydrogenase (NAD+) activity"/>
    <property type="evidence" value="ECO:0007669"/>
    <property type="project" value="UniProtKB-UniRule"/>
</dbReference>
<dbReference type="GO" id="GO:0000166">
    <property type="term" value="F:nucleotide binding"/>
    <property type="evidence" value="ECO:0007669"/>
    <property type="project" value="InterPro"/>
</dbReference>
<dbReference type="GO" id="GO:0019310">
    <property type="term" value="P:inositol catabolic process"/>
    <property type="evidence" value="ECO:0007669"/>
    <property type="project" value="UniProtKB-UniRule"/>
</dbReference>
<dbReference type="Gene3D" id="3.30.360.10">
    <property type="entry name" value="Dihydrodipicolinate Reductase, domain 2"/>
    <property type="match status" value="1"/>
</dbReference>
<dbReference type="Gene3D" id="3.40.50.720">
    <property type="entry name" value="NAD(P)-binding Rossmann-like Domain"/>
    <property type="match status" value="1"/>
</dbReference>
<dbReference type="HAMAP" id="MF_01671">
    <property type="entry name" value="IolG"/>
    <property type="match status" value="1"/>
</dbReference>
<dbReference type="InterPro" id="IPR050424">
    <property type="entry name" value="Gfo-Idh-MocA_inositol_DH"/>
</dbReference>
<dbReference type="InterPro" id="IPR004104">
    <property type="entry name" value="Gfo/Idh/MocA-like_OxRdtase_C"/>
</dbReference>
<dbReference type="InterPro" id="IPR000683">
    <property type="entry name" value="Gfo/Idh/MocA-like_OxRdtase_N"/>
</dbReference>
<dbReference type="InterPro" id="IPR023794">
    <property type="entry name" value="MI/DCI_dehydrogenase"/>
</dbReference>
<dbReference type="InterPro" id="IPR036291">
    <property type="entry name" value="NAD(P)-bd_dom_sf"/>
</dbReference>
<dbReference type="PANTHER" id="PTHR43593">
    <property type="match status" value="1"/>
</dbReference>
<dbReference type="PANTHER" id="PTHR43593:SF1">
    <property type="entry name" value="INOSITOL 2-DEHYDROGENASE"/>
    <property type="match status" value="1"/>
</dbReference>
<dbReference type="Pfam" id="PF01408">
    <property type="entry name" value="GFO_IDH_MocA"/>
    <property type="match status" value="1"/>
</dbReference>
<dbReference type="Pfam" id="PF02894">
    <property type="entry name" value="GFO_IDH_MocA_C"/>
    <property type="match status" value="1"/>
</dbReference>
<dbReference type="SUPFAM" id="SSF55347">
    <property type="entry name" value="Glyceraldehyde-3-phosphate dehydrogenase-like, C-terminal domain"/>
    <property type="match status" value="1"/>
</dbReference>
<dbReference type="SUPFAM" id="SSF51735">
    <property type="entry name" value="NAD(P)-binding Rossmann-fold domains"/>
    <property type="match status" value="1"/>
</dbReference>
<feature type="chain" id="PRO_0000352551" description="Inositol 2-dehydrogenase 1">
    <location>
        <begin position="1"/>
        <end position="337"/>
    </location>
</feature>
<name>IOLG1_PAEAT</name>
<evidence type="ECO:0000255" key="1">
    <source>
        <dbReference type="HAMAP-Rule" id="MF_01671"/>
    </source>
</evidence>